<gene>
    <name type="primary">malaS</name>
    <name type="ORF">DDB_G0275655</name>
</gene>
<reference key="1">
    <citation type="journal article" date="2002" name="Nature">
        <title>Sequence and analysis of chromosome 2 of Dictyostelium discoideum.</title>
        <authorList>
            <person name="Gloeckner G."/>
            <person name="Eichinger L."/>
            <person name="Szafranski K."/>
            <person name="Pachebat J.A."/>
            <person name="Bankier A.T."/>
            <person name="Dear P.H."/>
            <person name="Lehmann R."/>
            <person name="Baumgart C."/>
            <person name="Parra G."/>
            <person name="Abril J.F."/>
            <person name="Guigo R."/>
            <person name="Kumpf K."/>
            <person name="Tunggal B."/>
            <person name="Cox E.C."/>
            <person name="Quail M.A."/>
            <person name="Platzer M."/>
            <person name="Rosenthal A."/>
            <person name="Noegel A.A."/>
        </authorList>
    </citation>
    <scope>NUCLEOTIDE SEQUENCE [LARGE SCALE GENOMIC DNA]</scope>
    <source>
        <strain>AX4</strain>
    </source>
</reference>
<reference key="2">
    <citation type="journal article" date="2005" name="Nature">
        <title>The genome of the social amoeba Dictyostelium discoideum.</title>
        <authorList>
            <person name="Eichinger L."/>
            <person name="Pachebat J.A."/>
            <person name="Gloeckner G."/>
            <person name="Rajandream M.A."/>
            <person name="Sucgang R."/>
            <person name="Berriman M."/>
            <person name="Song J."/>
            <person name="Olsen R."/>
            <person name="Szafranski K."/>
            <person name="Xu Q."/>
            <person name="Tunggal B."/>
            <person name="Kummerfeld S."/>
            <person name="Madera M."/>
            <person name="Konfortov B.A."/>
            <person name="Rivero F."/>
            <person name="Bankier A.T."/>
            <person name="Lehmann R."/>
            <person name="Hamlin N."/>
            <person name="Davies R."/>
            <person name="Gaudet P."/>
            <person name="Fey P."/>
            <person name="Pilcher K."/>
            <person name="Chen G."/>
            <person name="Saunders D."/>
            <person name="Sodergren E.J."/>
            <person name="Davis P."/>
            <person name="Kerhornou A."/>
            <person name="Nie X."/>
            <person name="Hall N."/>
            <person name="Anjard C."/>
            <person name="Hemphill L."/>
            <person name="Bason N."/>
            <person name="Farbrother P."/>
            <person name="Desany B."/>
            <person name="Just E."/>
            <person name="Morio T."/>
            <person name="Rost R."/>
            <person name="Churcher C.M."/>
            <person name="Cooper J."/>
            <person name="Haydock S."/>
            <person name="van Driessche N."/>
            <person name="Cronin A."/>
            <person name="Goodhead I."/>
            <person name="Muzny D.M."/>
            <person name="Mourier T."/>
            <person name="Pain A."/>
            <person name="Lu M."/>
            <person name="Harper D."/>
            <person name="Lindsay R."/>
            <person name="Hauser H."/>
            <person name="James K.D."/>
            <person name="Quiles M."/>
            <person name="Madan Babu M."/>
            <person name="Saito T."/>
            <person name="Buchrieser C."/>
            <person name="Wardroper A."/>
            <person name="Felder M."/>
            <person name="Thangavelu M."/>
            <person name="Johnson D."/>
            <person name="Knights A."/>
            <person name="Loulseged H."/>
            <person name="Mungall K.L."/>
            <person name="Oliver K."/>
            <person name="Price C."/>
            <person name="Quail M.A."/>
            <person name="Urushihara H."/>
            <person name="Hernandez J."/>
            <person name="Rabbinowitsch E."/>
            <person name="Steffen D."/>
            <person name="Sanders M."/>
            <person name="Ma J."/>
            <person name="Kohara Y."/>
            <person name="Sharp S."/>
            <person name="Simmonds M.N."/>
            <person name="Spiegler S."/>
            <person name="Tivey A."/>
            <person name="Sugano S."/>
            <person name="White B."/>
            <person name="Walker D."/>
            <person name="Woodward J.R."/>
            <person name="Winckler T."/>
            <person name="Tanaka Y."/>
            <person name="Shaulsky G."/>
            <person name="Schleicher M."/>
            <person name="Weinstock G.M."/>
            <person name="Rosenthal A."/>
            <person name="Cox E.C."/>
            <person name="Chisholm R.L."/>
            <person name="Gibbs R.A."/>
            <person name="Loomis W.F."/>
            <person name="Platzer M."/>
            <person name="Kay R.R."/>
            <person name="Williams J.G."/>
            <person name="Dear P.H."/>
            <person name="Noegel A.A."/>
            <person name="Barrell B.G."/>
            <person name="Kuspa A."/>
        </authorList>
    </citation>
    <scope>NUCLEOTIDE SEQUENCE [LARGE SCALE GENOMIC DNA]</scope>
    <source>
        <strain>AX4</strain>
    </source>
</reference>
<keyword id="KW-0030">Aminoacyl-tRNA synthetase</keyword>
<keyword id="KW-0067">ATP-binding</keyword>
<keyword id="KW-0436">Ligase</keyword>
<keyword id="KW-0479">Metal-binding</keyword>
<keyword id="KW-0496">Mitochondrion</keyword>
<keyword id="KW-0547">Nucleotide-binding</keyword>
<keyword id="KW-0648">Protein biosynthesis</keyword>
<keyword id="KW-1185">Reference proteome</keyword>
<keyword id="KW-0694">RNA-binding</keyword>
<keyword id="KW-0820">tRNA-binding</keyword>
<keyword id="KW-0862">Zinc</keyword>
<proteinExistence type="inferred from homology"/>
<dbReference type="EC" id="6.1.1.7" evidence="1"/>
<dbReference type="EMBL" id="AAFI02000013">
    <property type="protein sequence ID" value="EAL69578.1"/>
    <property type="molecule type" value="Genomic_DNA"/>
</dbReference>
<dbReference type="RefSeq" id="XP_643527.1">
    <property type="nucleotide sequence ID" value="XM_638435.1"/>
</dbReference>
<dbReference type="SMR" id="Q86H43"/>
<dbReference type="FunCoup" id="Q86H43">
    <property type="interactions" value="156"/>
</dbReference>
<dbReference type="STRING" id="44689.Q86H43"/>
<dbReference type="PaxDb" id="44689-DDB0231265"/>
<dbReference type="EnsemblProtists" id="EAL69578">
    <property type="protein sequence ID" value="EAL69578"/>
    <property type="gene ID" value="DDB_G0275655"/>
</dbReference>
<dbReference type="GeneID" id="8620109"/>
<dbReference type="KEGG" id="ddi:DDB_G0275655"/>
<dbReference type="dictyBase" id="DDB_G0275655">
    <property type="gene designation" value="malaS"/>
</dbReference>
<dbReference type="VEuPathDB" id="AmoebaDB:DDB_G0275655"/>
<dbReference type="eggNOG" id="KOG0188">
    <property type="taxonomic scope" value="Eukaryota"/>
</dbReference>
<dbReference type="HOGENOM" id="CLU_004485_1_1_1"/>
<dbReference type="InParanoid" id="Q86H43"/>
<dbReference type="OMA" id="GFDMEME"/>
<dbReference type="PhylomeDB" id="Q86H43"/>
<dbReference type="PRO" id="PR:Q86H43"/>
<dbReference type="Proteomes" id="UP000002195">
    <property type="component" value="Chromosome 2"/>
</dbReference>
<dbReference type="GO" id="GO:0005739">
    <property type="term" value="C:mitochondrion"/>
    <property type="evidence" value="ECO:0000250"/>
    <property type="project" value="dictyBase"/>
</dbReference>
<dbReference type="GO" id="GO:0004813">
    <property type="term" value="F:alanine-tRNA ligase activity"/>
    <property type="evidence" value="ECO:0000250"/>
    <property type="project" value="dictyBase"/>
</dbReference>
<dbReference type="GO" id="GO:0002161">
    <property type="term" value="F:aminoacyl-tRNA deacylase activity"/>
    <property type="evidence" value="ECO:0000318"/>
    <property type="project" value="GO_Central"/>
</dbReference>
<dbReference type="GO" id="GO:0005524">
    <property type="term" value="F:ATP binding"/>
    <property type="evidence" value="ECO:0007669"/>
    <property type="project" value="UniProtKB-UniRule"/>
</dbReference>
<dbReference type="GO" id="GO:0000049">
    <property type="term" value="F:tRNA binding"/>
    <property type="evidence" value="ECO:0007669"/>
    <property type="project" value="UniProtKB-KW"/>
</dbReference>
<dbReference type="GO" id="GO:0008270">
    <property type="term" value="F:zinc ion binding"/>
    <property type="evidence" value="ECO:0007669"/>
    <property type="project" value="UniProtKB-UniRule"/>
</dbReference>
<dbReference type="GO" id="GO:0006419">
    <property type="term" value="P:alanyl-tRNA aminoacylation"/>
    <property type="evidence" value="ECO:0000250"/>
    <property type="project" value="dictyBase"/>
</dbReference>
<dbReference type="CDD" id="cd00673">
    <property type="entry name" value="AlaRS_core"/>
    <property type="match status" value="1"/>
</dbReference>
<dbReference type="FunFam" id="3.30.980.10:FF:000004">
    <property type="entry name" value="Alanine--tRNA ligase, cytoplasmic"/>
    <property type="match status" value="1"/>
</dbReference>
<dbReference type="FunFam" id="3.30.930.10:FF:000280">
    <property type="entry name" value="Alanine--tRNA ligase, mitochondrial"/>
    <property type="match status" value="1"/>
</dbReference>
<dbReference type="Gene3D" id="2.40.30.130">
    <property type="match status" value="1"/>
</dbReference>
<dbReference type="Gene3D" id="3.10.310.40">
    <property type="match status" value="1"/>
</dbReference>
<dbReference type="Gene3D" id="3.30.54.20">
    <property type="match status" value="1"/>
</dbReference>
<dbReference type="Gene3D" id="3.30.930.10">
    <property type="entry name" value="Bira Bifunctional Protein, Domain 2"/>
    <property type="match status" value="1"/>
</dbReference>
<dbReference type="Gene3D" id="3.30.980.10">
    <property type="entry name" value="Threonyl-trna Synthetase, Chain A, domain 2"/>
    <property type="match status" value="1"/>
</dbReference>
<dbReference type="HAMAP" id="MF_00036_B">
    <property type="entry name" value="Ala_tRNA_synth_B"/>
    <property type="match status" value="1"/>
</dbReference>
<dbReference type="InterPro" id="IPR045864">
    <property type="entry name" value="aa-tRNA-synth_II/BPL/LPL"/>
</dbReference>
<dbReference type="InterPro" id="IPR002318">
    <property type="entry name" value="Ala-tRNA-lgiase_IIc"/>
</dbReference>
<dbReference type="InterPro" id="IPR018162">
    <property type="entry name" value="Ala-tRNA-ligase_IIc_anticod-bd"/>
</dbReference>
<dbReference type="InterPro" id="IPR018165">
    <property type="entry name" value="Ala-tRNA-synth_IIc_core"/>
</dbReference>
<dbReference type="InterPro" id="IPR018164">
    <property type="entry name" value="Ala-tRNA-synth_IIc_N"/>
</dbReference>
<dbReference type="InterPro" id="IPR050058">
    <property type="entry name" value="Ala-tRNA_ligase"/>
</dbReference>
<dbReference type="InterPro" id="IPR023033">
    <property type="entry name" value="Ala_tRNA_ligase_euk/bac"/>
</dbReference>
<dbReference type="InterPro" id="IPR018163">
    <property type="entry name" value="Thr/Ala-tRNA-synth_IIc_edit"/>
</dbReference>
<dbReference type="InterPro" id="IPR009000">
    <property type="entry name" value="Transl_B-barrel_sf"/>
</dbReference>
<dbReference type="InterPro" id="IPR012947">
    <property type="entry name" value="tRNA_SAD"/>
</dbReference>
<dbReference type="NCBIfam" id="TIGR00344">
    <property type="entry name" value="alaS"/>
    <property type="match status" value="1"/>
</dbReference>
<dbReference type="PANTHER" id="PTHR11777:SF9">
    <property type="entry name" value="ALANINE--TRNA LIGASE, CYTOPLASMIC"/>
    <property type="match status" value="1"/>
</dbReference>
<dbReference type="PANTHER" id="PTHR11777">
    <property type="entry name" value="ALANYL-TRNA SYNTHETASE"/>
    <property type="match status" value="1"/>
</dbReference>
<dbReference type="Pfam" id="PF01411">
    <property type="entry name" value="tRNA-synt_2c"/>
    <property type="match status" value="1"/>
</dbReference>
<dbReference type="Pfam" id="PF07973">
    <property type="entry name" value="tRNA_SAD"/>
    <property type="match status" value="1"/>
</dbReference>
<dbReference type="PRINTS" id="PR00980">
    <property type="entry name" value="TRNASYNTHALA"/>
</dbReference>
<dbReference type="SMART" id="SM00863">
    <property type="entry name" value="tRNA_SAD"/>
    <property type="match status" value="1"/>
</dbReference>
<dbReference type="SUPFAM" id="SSF55681">
    <property type="entry name" value="Class II aaRS and biotin synthetases"/>
    <property type="match status" value="1"/>
</dbReference>
<dbReference type="SUPFAM" id="SSF101353">
    <property type="entry name" value="Putative anticodon-binding domain of alanyl-tRNA synthetase (AlaRS)"/>
    <property type="match status" value="1"/>
</dbReference>
<dbReference type="SUPFAM" id="SSF55186">
    <property type="entry name" value="ThrRS/AlaRS common domain"/>
    <property type="match status" value="1"/>
</dbReference>
<dbReference type="SUPFAM" id="SSF50447">
    <property type="entry name" value="Translation proteins"/>
    <property type="match status" value="1"/>
</dbReference>
<dbReference type="PROSITE" id="PS50860">
    <property type="entry name" value="AA_TRNA_LIGASE_II_ALA"/>
    <property type="match status" value="1"/>
</dbReference>
<organism>
    <name type="scientific">Dictyostelium discoideum</name>
    <name type="common">Social amoeba</name>
    <dbReference type="NCBI Taxonomy" id="44689"/>
    <lineage>
        <taxon>Eukaryota</taxon>
        <taxon>Amoebozoa</taxon>
        <taxon>Evosea</taxon>
        <taxon>Eumycetozoa</taxon>
        <taxon>Dictyostelia</taxon>
        <taxon>Dictyosteliales</taxon>
        <taxon>Dictyosteliaceae</taxon>
        <taxon>Dictyostelium</taxon>
    </lineage>
</organism>
<name>SYAM_DICDI</name>
<accession>Q86H43</accession>
<accession>Q552Z3</accession>
<evidence type="ECO:0000255" key="1">
    <source>
        <dbReference type="HAMAP-Rule" id="MF_03133"/>
    </source>
</evidence>
<evidence type="ECO:0000256" key="2">
    <source>
        <dbReference type="SAM" id="MobiDB-lite"/>
    </source>
</evidence>
<comment type="function">
    <text evidence="1">Catalyzes the attachment of alanine to tRNA(Ala) in a two-step reaction: alanine is first activated by ATP to form Ala-AMP and then transferred to the acceptor end of tRNA(Ala). Also edits incorrectly charged tRNA(Ala) via its editing domain.</text>
</comment>
<comment type="catalytic activity">
    <reaction evidence="1">
        <text>tRNA(Ala) + L-alanine + ATP = L-alanyl-tRNA(Ala) + AMP + diphosphate</text>
        <dbReference type="Rhea" id="RHEA:12540"/>
        <dbReference type="Rhea" id="RHEA-COMP:9657"/>
        <dbReference type="Rhea" id="RHEA-COMP:9923"/>
        <dbReference type="ChEBI" id="CHEBI:30616"/>
        <dbReference type="ChEBI" id="CHEBI:33019"/>
        <dbReference type="ChEBI" id="CHEBI:57972"/>
        <dbReference type="ChEBI" id="CHEBI:78442"/>
        <dbReference type="ChEBI" id="CHEBI:78497"/>
        <dbReference type="ChEBI" id="CHEBI:456215"/>
        <dbReference type="EC" id="6.1.1.7"/>
    </reaction>
</comment>
<comment type="cofactor">
    <cofactor evidence="1">
        <name>Zn(2+)</name>
        <dbReference type="ChEBI" id="CHEBI:29105"/>
    </cofactor>
    <text evidence="1">Binds 1 zinc ion per subunit.</text>
</comment>
<comment type="subunit">
    <text evidence="1">Monomer.</text>
</comment>
<comment type="subcellular location">
    <subcellularLocation>
        <location evidence="1">Mitochondrion</location>
    </subcellularLocation>
</comment>
<comment type="domain">
    <text evidence="1">Consists of three domains; the N-terminal catalytic domain, the editing domain and the C-terminal C-Ala domain. The editing domain removes incorrectly charged amino acids, while the C-Ala domain, along with tRNA(Ala), serves as a bridge to cooperatively bring together the editing and aminoacylation centers thus stimulating deacylation of misacylated tRNAs.</text>
</comment>
<comment type="similarity">
    <text evidence="1">Belongs to the class-II aminoacyl-tRNA synthetase family.</text>
</comment>
<protein>
    <recommendedName>
        <fullName evidence="1">Alanine--tRNA ligase, mitochondrial</fullName>
        <ecNumber evidence="1">6.1.1.7</ecNumber>
    </recommendedName>
    <alternativeName>
        <fullName evidence="1">Alanyl-tRNA synthetase</fullName>
        <shortName evidence="1">AlaRS</shortName>
    </alternativeName>
</protein>
<feature type="chain" id="PRO_0000402120" description="Alanine--tRNA ligase, mitochondrial">
    <location>
        <begin position="1"/>
        <end position="932"/>
    </location>
</feature>
<feature type="region of interest" description="Disordered" evidence="2">
    <location>
        <begin position="458"/>
        <end position="480"/>
    </location>
</feature>
<feature type="compositionally biased region" description="Low complexity" evidence="2">
    <location>
        <begin position="464"/>
        <end position="478"/>
    </location>
</feature>
<feature type="binding site" evidence="1">
    <location>
        <position position="610"/>
    </location>
    <ligand>
        <name>Zn(2+)</name>
        <dbReference type="ChEBI" id="CHEBI:29105"/>
    </ligand>
</feature>
<feature type="binding site" evidence="1">
    <location>
        <position position="614"/>
    </location>
    <ligand>
        <name>Zn(2+)</name>
        <dbReference type="ChEBI" id="CHEBI:29105"/>
    </ligand>
</feature>
<feature type="binding site" evidence="1">
    <location>
        <position position="713"/>
    </location>
    <ligand>
        <name>Zn(2+)</name>
        <dbReference type="ChEBI" id="CHEBI:29105"/>
    </ligand>
</feature>
<feature type="binding site" evidence="1">
    <location>
        <position position="717"/>
    </location>
    <ligand>
        <name>Zn(2+)</name>
        <dbReference type="ChEBI" id="CHEBI:29105"/>
    </ligand>
</feature>
<sequence length="932" mass="105052">MIRSSIKNKITTTKSLSCISLINRQYGTSTKEVRETFLNYFEKNGHKRLPSGSLLPYNDNSLLFTNAGMVQFKNQFTGNEESKYKKVTTSQKCVRAGGKHNDLDNVGYTARHHTFFEMLGNFSFGGYNHFKRDSIQHAWDLLTKEYGLPKERLAISVLEGDEESAEIWRNQIGLPNDKIMYKGREDNFWSMGDGPGPCGPCSEIFWDHGKEVDGERYLEIWNLVFMQYNKSGKEGDEMPVDKLPIPCVDTGMGLERMASVLQGKFTNYDIDLFQNLINSFKEIVTMDVGRAQFQLQQDPQRVETAYRVIADHLRSISFLISDGVIPFNIGRGYVLRKIIRRALSYGKILGFNGPFLSTLFPLLEREMGDIYPQLIERSNEIRNVILNEEGTFYNAIQRGIPYLEEFVQQNKLNEESLFLLYNTYGLPLEMSQVKAKQNNIEIDMDKVNKLIDETREQSRLTWNTSSSSSDQTTQQTTQLPEKTFLSWKSDNIKPKFIGYNGCVENDNSKVLRSHFDNDSHLVYLSLDETPFYGTSGGQVGDVGELINVSSGKNVYRVINTIKPYEGGLVLVVEWDPSQQLASQVYQDLKQDSLLNCRVDRSIRNQVAVHHSATHLLHAALRNVIGKSVVQAGSLVGSESLRFDFTHGQKLTPNQIEQIEQWVNDAIAKDIALNTDEIPYEQASKNSDTLQLFSEKYSELVRVVSIPGFSKELCGGTHVERSSSIHQFKIISESSVAAGTRRIEAVAGLAATNFFKNHYQLVHQLSNSINSPIVNFQQSFERLVNTNSKQEKEIFDLKLKIAQLSSVNYNGQYKSDNGGEMIPLSLHIIDCEDKKAFTKVTENFAKEFSSSPIQLTISKGGKVLCQLLSSSSSSSSSLSADTVLKQLFKSIGMGKGGGNKLMANASIQPLNNEILNSILNWSNVNNNYNNKKN</sequence>